<evidence type="ECO:0000255" key="1">
    <source>
        <dbReference type="HAMAP-Rule" id="MF_03139"/>
    </source>
</evidence>
<keyword id="KW-0456">Lyase</keyword>
<keyword id="KW-1185">Reference proteome</keyword>
<sequence>MSLATLDATQHPNLPASAATLFKAKAHKKLSFEQIAQHIGRNEVATAALFYGQAKASPEDIQKLSELLNISPQVLEEQLSGFPDRGRSVEMPPKEPLIYRLYEIVQNYGYAYKAVLNEKFGDGIMSAISFSTKVEKETDADGNNWAVITLRGKW</sequence>
<protein>
    <recommendedName>
        <fullName evidence="1">Cyanate hydratase</fullName>
        <shortName evidence="1">Cyanase</shortName>
        <ecNumber evidence="1">4.2.1.104</ecNumber>
    </recommendedName>
    <alternativeName>
        <fullName evidence="1">Cyanate hydrolase</fullName>
    </alternativeName>
    <alternativeName>
        <fullName evidence="1">Cyanate lyase</fullName>
    </alternativeName>
</protein>
<proteinExistence type="inferred from homology"/>
<organism>
    <name type="scientific">Aspergillus fumigatus (strain ATCC MYA-4609 / CBS 101355 / FGSC A1100 / Af293)</name>
    <name type="common">Neosartorya fumigata</name>
    <dbReference type="NCBI Taxonomy" id="330879"/>
    <lineage>
        <taxon>Eukaryota</taxon>
        <taxon>Fungi</taxon>
        <taxon>Dikarya</taxon>
        <taxon>Ascomycota</taxon>
        <taxon>Pezizomycotina</taxon>
        <taxon>Eurotiomycetes</taxon>
        <taxon>Eurotiomycetidae</taxon>
        <taxon>Eurotiales</taxon>
        <taxon>Aspergillaceae</taxon>
        <taxon>Aspergillus</taxon>
        <taxon>Aspergillus subgen. Fumigati</taxon>
    </lineage>
</organism>
<dbReference type="EC" id="4.2.1.104" evidence="1"/>
<dbReference type="EMBL" id="AAHF01000001">
    <property type="protein sequence ID" value="EAL93952.1"/>
    <property type="molecule type" value="Genomic_DNA"/>
</dbReference>
<dbReference type="RefSeq" id="XP_755990.1">
    <property type="nucleotide sequence ID" value="XM_750897.1"/>
</dbReference>
<dbReference type="SMR" id="Q4WZL3"/>
<dbReference type="STRING" id="330879.Q4WZL3"/>
<dbReference type="EnsemblFungi" id="EAL93952">
    <property type="protein sequence ID" value="EAL93952"/>
    <property type="gene ID" value="AFUA_2G16530"/>
</dbReference>
<dbReference type="GeneID" id="3513027"/>
<dbReference type="KEGG" id="afm:AFUA_2G16530"/>
<dbReference type="VEuPathDB" id="FungiDB:Afu2g16530"/>
<dbReference type="eggNOG" id="ENOG502S3YJ">
    <property type="taxonomic scope" value="Eukaryota"/>
</dbReference>
<dbReference type="HOGENOM" id="CLU_103452_0_0_1"/>
<dbReference type="InParanoid" id="Q4WZL3"/>
<dbReference type="OMA" id="YELVMIN"/>
<dbReference type="OrthoDB" id="10019422at2759"/>
<dbReference type="Proteomes" id="UP000002530">
    <property type="component" value="Chromosome 2"/>
</dbReference>
<dbReference type="GO" id="GO:0008824">
    <property type="term" value="F:cyanate hydratase activity"/>
    <property type="evidence" value="ECO:0007669"/>
    <property type="project" value="UniProtKB-UniRule"/>
</dbReference>
<dbReference type="GO" id="GO:0003677">
    <property type="term" value="F:DNA binding"/>
    <property type="evidence" value="ECO:0007669"/>
    <property type="project" value="InterPro"/>
</dbReference>
<dbReference type="GO" id="GO:0009439">
    <property type="term" value="P:cyanate metabolic process"/>
    <property type="evidence" value="ECO:0007669"/>
    <property type="project" value="UniProtKB-UniRule"/>
</dbReference>
<dbReference type="CDD" id="cd00559">
    <property type="entry name" value="Cyanase_C"/>
    <property type="match status" value="1"/>
</dbReference>
<dbReference type="Gene3D" id="3.30.1160.10">
    <property type="entry name" value="Cyanate lyase, C-terminal domain"/>
    <property type="match status" value="1"/>
</dbReference>
<dbReference type="Gene3D" id="1.10.260.40">
    <property type="entry name" value="lambda repressor-like DNA-binding domains"/>
    <property type="match status" value="1"/>
</dbReference>
<dbReference type="HAMAP" id="MF_00535">
    <property type="entry name" value="Cyanate_hydrat"/>
    <property type="match status" value="1"/>
</dbReference>
<dbReference type="InterPro" id="IPR001387">
    <property type="entry name" value="Cro/C1-type_HTH"/>
</dbReference>
<dbReference type="InterPro" id="IPR008076">
    <property type="entry name" value="Cyanase"/>
</dbReference>
<dbReference type="InterPro" id="IPR003712">
    <property type="entry name" value="Cyanate_lyase_C"/>
</dbReference>
<dbReference type="InterPro" id="IPR036581">
    <property type="entry name" value="Cyanate_lyase_C_sf"/>
</dbReference>
<dbReference type="InterPro" id="IPR010982">
    <property type="entry name" value="Lambda_DNA-bd_dom_sf"/>
</dbReference>
<dbReference type="NCBIfam" id="TIGR00673">
    <property type="entry name" value="cynS"/>
    <property type="match status" value="1"/>
</dbReference>
<dbReference type="PANTHER" id="PTHR34186">
    <property type="entry name" value="CYANATE HYDRATASE"/>
    <property type="match status" value="1"/>
</dbReference>
<dbReference type="PANTHER" id="PTHR34186:SF2">
    <property type="entry name" value="CYANATE HYDRATASE"/>
    <property type="match status" value="1"/>
</dbReference>
<dbReference type="Pfam" id="PF02560">
    <property type="entry name" value="Cyanate_lyase"/>
    <property type="match status" value="1"/>
</dbReference>
<dbReference type="PIRSF" id="PIRSF001263">
    <property type="entry name" value="Cyanate_hydratas"/>
    <property type="match status" value="1"/>
</dbReference>
<dbReference type="PRINTS" id="PR01693">
    <property type="entry name" value="CYANASE"/>
</dbReference>
<dbReference type="SMART" id="SM01116">
    <property type="entry name" value="Cyanate_lyase"/>
    <property type="match status" value="1"/>
</dbReference>
<dbReference type="SUPFAM" id="SSF55234">
    <property type="entry name" value="Cyanase C-terminal domain"/>
    <property type="match status" value="1"/>
</dbReference>
<dbReference type="SUPFAM" id="SSF47413">
    <property type="entry name" value="lambda repressor-like DNA-binding domains"/>
    <property type="match status" value="1"/>
</dbReference>
<comment type="function">
    <text evidence="1">Catalyzes the reaction of cyanate with bicarbonate to produce ammonia and carbon dioxide.</text>
</comment>
<comment type="catalytic activity">
    <reaction evidence="1">
        <text>cyanate + hydrogencarbonate + 3 H(+) = NH4(+) + 2 CO2</text>
        <dbReference type="Rhea" id="RHEA:11120"/>
        <dbReference type="ChEBI" id="CHEBI:15378"/>
        <dbReference type="ChEBI" id="CHEBI:16526"/>
        <dbReference type="ChEBI" id="CHEBI:17544"/>
        <dbReference type="ChEBI" id="CHEBI:28938"/>
        <dbReference type="ChEBI" id="CHEBI:29195"/>
        <dbReference type="EC" id="4.2.1.104"/>
    </reaction>
</comment>
<comment type="similarity">
    <text evidence="1">Belongs to the cyanase family.</text>
</comment>
<reference key="1">
    <citation type="journal article" date="2005" name="Nature">
        <title>Genomic sequence of the pathogenic and allergenic filamentous fungus Aspergillus fumigatus.</title>
        <authorList>
            <person name="Nierman W.C."/>
            <person name="Pain A."/>
            <person name="Anderson M.J."/>
            <person name="Wortman J.R."/>
            <person name="Kim H.S."/>
            <person name="Arroyo J."/>
            <person name="Berriman M."/>
            <person name="Abe K."/>
            <person name="Archer D.B."/>
            <person name="Bermejo C."/>
            <person name="Bennett J.W."/>
            <person name="Bowyer P."/>
            <person name="Chen D."/>
            <person name="Collins M."/>
            <person name="Coulsen R."/>
            <person name="Davies R."/>
            <person name="Dyer P.S."/>
            <person name="Farman M.L."/>
            <person name="Fedorova N."/>
            <person name="Fedorova N.D."/>
            <person name="Feldblyum T.V."/>
            <person name="Fischer R."/>
            <person name="Fosker N."/>
            <person name="Fraser A."/>
            <person name="Garcia J.L."/>
            <person name="Garcia M.J."/>
            <person name="Goble A."/>
            <person name="Goldman G.H."/>
            <person name="Gomi K."/>
            <person name="Griffith-Jones S."/>
            <person name="Gwilliam R."/>
            <person name="Haas B.J."/>
            <person name="Haas H."/>
            <person name="Harris D.E."/>
            <person name="Horiuchi H."/>
            <person name="Huang J."/>
            <person name="Humphray S."/>
            <person name="Jimenez J."/>
            <person name="Keller N."/>
            <person name="Khouri H."/>
            <person name="Kitamoto K."/>
            <person name="Kobayashi T."/>
            <person name="Konzack S."/>
            <person name="Kulkarni R."/>
            <person name="Kumagai T."/>
            <person name="Lafton A."/>
            <person name="Latge J.-P."/>
            <person name="Li W."/>
            <person name="Lord A."/>
            <person name="Lu C."/>
            <person name="Majoros W.H."/>
            <person name="May G.S."/>
            <person name="Miller B.L."/>
            <person name="Mohamoud Y."/>
            <person name="Molina M."/>
            <person name="Monod M."/>
            <person name="Mouyna I."/>
            <person name="Mulligan S."/>
            <person name="Murphy L.D."/>
            <person name="O'Neil S."/>
            <person name="Paulsen I."/>
            <person name="Penalva M.A."/>
            <person name="Pertea M."/>
            <person name="Price C."/>
            <person name="Pritchard B.L."/>
            <person name="Quail M.A."/>
            <person name="Rabbinowitsch E."/>
            <person name="Rawlins N."/>
            <person name="Rajandream M.A."/>
            <person name="Reichard U."/>
            <person name="Renauld H."/>
            <person name="Robson G.D."/>
            <person name="Rodriguez de Cordoba S."/>
            <person name="Rodriguez-Pena J.M."/>
            <person name="Ronning C.M."/>
            <person name="Rutter S."/>
            <person name="Salzberg S.L."/>
            <person name="Sanchez M."/>
            <person name="Sanchez-Ferrero J.C."/>
            <person name="Saunders D."/>
            <person name="Seeger K."/>
            <person name="Squares R."/>
            <person name="Squares S."/>
            <person name="Takeuchi M."/>
            <person name="Tekaia F."/>
            <person name="Turner G."/>
            <person name="Vazquez de Aldana C.R."/>
            <person name="Weidman J."/>
            <person name="White O."/>
            <person name="Woodward J.R."/>
            <person name="Yu J.-H."/>
            <person name="Fraser C.M."/>
            <person name="Galagan J.E."/>
            <person name="Asai K."/>
            <person name="Machida M."/>
            <person name="Hall N."/>
            <person name="Barrell B.G."/>
            <person name="Denning D.W."/>
        </authorList>
    </citation>
    <scope>NUCLEOTIDE SEQUENCE [LARGE SCALE GENOMIC DNA]</scope>
    <source>
        <strain>ATCC MYA-4609 / CBS 101355 / FGSC A1100 / Af293</strain>
    </source>
</reference>
<feature type="chain" id="PRO_0000403241" description="Cyanate hydratase">
    <location>
        <begin position="1"/>
        <end position="154"/>
    </location>
</feature>
<feature type="active site" evidence="1">
    <location>
        <position position="100"/>
    </location>
</feature>
<feature type="active site" evidence="1">
    <location>
        <position position="103"/>
    </location>
</feature>
<feature type="active site" evidence="1">
    <location>
        <position position="126"/>
    </location>
</feature>
<accession>Q4WZL3</accession>
<name>CYNS_ASPFU</name>
<gene>
    <name evidence="1" type="primary">cyn1</name>
    <name type="ORF">AFUA_2G16530</name>
</gene>